<comment type="function">
    <text evidence="1">Forms an efflux pump with AaeA. Could function as a metabolic relief valve, allowing to eliminate certain compounds when they accumulate to high levels in the cell.</text>
</comment>
<comment type="subcellular location">
    <subcellularLocation>
        <location evidence="1">Cell inner membrane</location>
        <topology evidence="1">Multi-pass membrane protein</topology>
    </subcellularLocation>
</comment>
<comment type="similarity">
    <text evidence="1">Belongs to the aromatic acid exporter ArAE (TC 2.A.85) family.</text>
</comment>
<dbReference type="EMBL" id="CP001063">
    <property type="protein sequence ID" value="ACD07922.1"/>
    <property type="molecule type" value="Genomic_DNA"/>
</dbReference>
<dbReference type="RefSeq" id="WP_000510974.1">
    <property type="nucleotide sequence ID" value="NC_010658.1"/>
</dbReference>
<dbReference type="SMR" id="B2U1U5"/>
<dbReference type="STRING" id="344609.SbBS512_E3536"/>
<dbReference type="KEGG" id="sbc:SbBS512_E3536"/>
<dbReference type="HOGENOM" id="CLU_027647_0_0_6"/>
<dbReference type="Proteomes" id="UP000001030">
    <property type="component" value="Chromosome"/>
</dbReference>
<dbReference type="GO" id="GO:0005886">
    <property type="term" value="C:plasma membrane"/>
    <property type="evidence" value="ECO:0007669"/>
    <property type="project" value="UniProtKB-SubCell"/>
</dbReference>
<dbReference type="GO" id="GO:0022857">
    <property type="term" value="F:transmembrane transporter activity"/>
    <property type="evidence" value="ECO:0007669"/>
    <property type="project" value="UniProtKB-UniRule"/>
</dbReference>
<dbReference type="GO" id="GO:0046942">
    <property type="term" value="P:carboxylic acid transport"/>
    <property type="evidence" value="ECO:0007669"/>
    <property type="project" value="InterPro"/>
</dbReference>
<dbReference type="HAMAP" id="MF_01545">
    <property type="entry name" value="AaeB"/>
    <property type="match status" value="1"/>
</dbReference>
<dbReference type="InterPro" id="IPR006726">
    <property type="entry name" value="PHBA_efflux_AaeB/fusaric-R"/>
</dbReference>
<dbReference type="InterPro" id="IPR023706">
    <property type="entry name" value="PHBA_efflux_pump_AaeB"/>
</dbReference>
<dbReference type="NCBIfam" id="NF007916">
    <property type="entry name" value="PRK10631.1"/>
    <property type="match status" value="1"/>
</dbReference>
<dbReference type="PANTHER" id="PTHR30509:SF9">
    <property type="entry name" value="MULTIDRUG RESISTANCE PROTEIN MDTO"/>
    <property type="match status" value="1"/>
</dbReference>
<dbReference type="PANTHER" id="PTHR30509">
    <property type="entry name" value="P-HYDROXYBENZOIC ACID EFFLUX PUMP SUBUNIT-RELATED"/>
    <property type="match status" value="1"/>
</dbReference>
<dbReference type="Pfam" id="PF04632">
    <property type="entry name" value="FUSC"/>
    <property type="match status" value="1"/>
</dbReference>
<feature type="chain" id="PRO_1000146748" description="p-hydroxybenzoic acid efflux pump subunit AaeB">
    <location>
        <begin position="1"/>
        <end position="655"/>
    </location>
</feature>
<feature type="transmembrane region" description="Helical" evidence="1">
    <location>
        <begin position="13"/>
        <end position="33"/>
    </location>
</feature>
<feature type="transmembrane region" description="Helical" evidence="1">
    <location>
        <begin position="38"/>
        <end position="58"/>
    </location>
</feature>
<feature type="transmembrane region" description="Helical" evidence="1">
    <location>
        <begin position="69"/>
        <end position="89"/>
    </location>
</feature>
<feature type="transmembrane region" description="Helical" evidence="1">
    <location>
        <begin position="93"/>
        <end position="113"/>
    </location>
</feature>
<feature type="transmembrane region" description="Helical" evidence="1">
    <location>
        <begin position="121"/>
        <end position="141"/>
    </location>
</feature>
<feature type="transmembrane region" description="Helical" evidence="1">
    <location>
        <begin position="152"/>
        <end position="172"/>
    </location>
</feature>
<feature type="transmembrane region" description="Helical" evidence="1">
    <location>
        <begin position="370"/>
        <end position="390"/>
    </location>
</feature>
<feature type="transmembrane region" description="Helical" evidence="1">
    <location>
        <begin position="407"/>
        <end position="427"/>
    </location>
</feature>
<feature type="transmembrane region" description="Helical" evidence="1">
    <location>
        <begin position="431"/>
        <end position="451"/>
    </location>
</feature>
<feature type="transmembrane region" description="Helical" evidence="1">
    <location>
        <begin position="459"/>
        <end position="479"/>
    </location>
</feature>
<feature type="transmembrane region" description="Helical" evidence="1">
    <location>
        <begin position="482"/>
        <end position="502"/>
    </location>
</feature>
<proteinExistence type="inferred from homology"/>
<reference key="1">
    <citation type="submission" date="2008-05" db="EMBL/GenBank/DDBJ databases">
        <title>Complete sequence of Shigella boydii serotype 18 strain BS512.</title>
        <authorList>
            <person name="Rasko D.A."/>
            <person name="Rosovitz M."/>
            <person name="Maurelli A.T."/>
            <person name="Myers G."/>
            <person name="Seshadri R."/>
            <person name="Cer R."/>
            <person name="Jiang L."/>
            <person name="Ravel J."/>
            <person name="Sebastian Y."/>
        </authorList>
    </citation>
    <scope>NUCLEOTIDE SEQUENCE [LARGE SCALE GENOMIC DNA]</scope>
    <source>
        <strain>CDC 3083-94 / BS512</strain>
    </source>
</reference>
<sequence length="655" mass="73610">MGIFSIANQHIRFAVKLATAIVLALFVGFHFQLETPRWAVLTAAIVAAGPAFAAGGEPYSGAIRYRGFLRIIGTFIGCIAGLVIIIAMIRAPLLMILVCCIWAGFCTWISSLVRIENSYAWGLAGYTALIIVITIQPEPLLTPQFAVERCSEIVIGIVCAIMADLLFSPRSIKQEVDRELESLLVAQYQLMQLCIKHGDGEVVDKAWGDLVRRTTALQGMRSNLNMESSRWARANRRLKAINTLSLTLITQSCETYLIQNTRPELITDTFREFFDTPVETAQDVHKQLKRLRRVIAWTGERETPVTIYSWVAAATRYQLLKRGVISNTKINATEEEILQGEPEVKVESAERHHAMVNFWRTTLSCILGTLFWLWTGWTSGSGAMVMIAVVTSLAMRLPNPRMVAIDFIYGTLAALPLGLLYFLVIIPNTQQSMLLLCISLAVLGFFLGIEVQQRRLGSMGALASTINIIVLDNPMTFHFSQFLDSALGQIVGCVLAFTVILLVRDKSRDRTGRVLLNQFVSAAVSAMTTNVARRKENHLPALYQQLFLLMNKFPGDLPKFRLALTMIIAHQRLRDAPIPVNEDLSAFHRQMRRTADHVISARSDDKRRRYFGQLLEELEIYQEKLRIWQAPPQVTEPVHRLAGMLHKYQHALTDS</sequence>
<accession>B2U1U5</accession>
<keyword id="KW-0997">Cell inner membrane</keyword>
<keyword id="KW-1003">Cell membrane</keyword>
<keyword id="KW-0472">Membrane</keyword>
<keyword id="KW-1185">Reference proteome</keyword>
<keyword id="KW-0812">Transmembrane</keyword>
<keyword id="KW-1133">Transmembrane helix</keyword>
<keyword id="KW-0813">Transport</keyword>
<name>AAEB_SHIB3</name>
<organism>
    <name type="scientific">Shigella boydii serotype 18 (strain CDC 3083-94 / BS512)</name>
    <dbReference type="NCBI Taxonomy" id="344609"/>
    <lineage>
        <taxon>Bacteria</taxon>
        <taxon>Pseudomonadati</taxon>
        <taxon>Pseudomonadota</taxon>
        <taxon>Gammaproteobacteria</taxon>
        <taxon>Enterobacterales</taxon>
        <taxon>Enterobacteriaceae</taxon>
        <taxon>Shigella</taxon>
    </lineage>
</organism>
<gene>
    <name evidence="1" type="primary">aaeB</name>
    <name type="ordered locus">SbBS512_E3536</name>
</gene>
<evidence type="ECO:0000255" key="1">
    <source>
        <dbReference type="HAMAP-Rule" id="MF_01545"/>
    </source>
</evidence>
<protein>
    <recommendedName>
        <fullName evidence="1">p-hydroxybenzoic acid efflux pump subunit AaeB</fullName>
        <shortName evidence="1">pHBA efflux pump protein B</shortName>
    </recommendedName>
</protein>